<gene>
    <name type="primary">recF</name>
    <name type="ordered locus">ML0003</name>
</gene>
<name>RECF_MYCLE</name>
<organism>
    <name type="scientific">Mycobacterium leprae (strain TN)</name>
    <dbReference type="NCBI Taxonomy" id="272631"/>
    <lineage>
        <taxon>Bacteria</taxon>
        <taxon>Bacillati</taxon>
        <taxon>Actinomycetota</taxon>
        <taxon>Actinomycetes</taxon>
        <taxon>Mycobacteriales</taxon>
        <taxon>Mycobacteriaceae</taxon>
        <taxon>Mycobacterium</taxon>
    </lineage>
</organism>
<comment type="function">
    <text evidence="1">The RecF protein is involved in DNA metabolism; it is required for DNA replication and normal SOS inducibility. RecF binds preferentially to single-stranded, linear DNA. It also seems to bind ATP (By similarity).</text>
</comment>
<comment type="subcellular location">
    <subcellularLocation>
        <location evidence="1">Cytoplasm</location>
    </subcellularLocation>
</comment>
<comment type="similarity">
    <text evidence="3">Belongs to the RecF family.</text>
</comment>
<evidence type="ECO:0000250" key="1"/>
<evidence type="ECO:0000255" key="2"/>
<evidence type="ECO:0000305" key="3"/>
<feature type="chain" id="PRO_0000196432" description="DNA replication and repair protein RecF">
    <location>
        <begin position="1"/>
        <end position="385"/>
    </location>
</feature>
<feature type="binding site" evidence="2">
    <location>
        <begin position="30"/>
        <end position="37"/>
    </location>
    <ligand>
        <name>ATP</name>
        <dbReference type="ChEBI" id="CHEBI:30616"/>
    </ligand>
</feature>
<feature type="sequence conflict" description="In Ref. 1; CAA94710." evidence="3" ref="1">
    <original>T</original>
    <variation>L</variation>
    <location>
        <position position="162"/>
    </location>
</feature>
<feature type="sequence conflict" description="In Ref. 3." evidence="3" ref="3">
    <original>P</original>
    <variation>T</variation>
    <location>
        <position position="221"/>
    </location>
</feature>
<reference key="1">
    <citation type="submission" date="1996-04" db="EMBL/GenBank/DDBJ databases">
        <authorList>
            <person name="Fsihi H."/>
            <person name="Salazar L."/>
            <person name="Takiff H.E."/>
            <person name="Cole S.T."/>
        </authorList>
    </citation>
    <scope>NUCLEOTIDE SEQUENCE [GENOMIC DNA]</scope>
</reference>
<reference key="2">
    <citation type="journal article" date="2001" name="Nature">
        <title>Massive gene decay in the leprosy bacillus.</title>
        <authorList>
            <person name="Cole S.T."/>
            <person name="Eiglmeier K."/>
            <person name="Parkhill J."/>
            <person name="James K.D."/>
            <person name="Thomson N.R."/>
            <person name="Wheeler P.R."/>
            <person name="Honore N."/>
            <person name="Garnier T."/>
            <person name="Churcher C.M."/>
            <person name="Harris D.E."/>
            <person name="Mungall K.L."/>
            <person name="Basham D."/>
            <person name="Brown D."/>
            <person name="Chillingworth T."/>
            <person name="Connor R."/>
            <person name="Davies R.M."/>
            <person name="Devlin K."/>
            <person name="Duthoy S."/>
            <person name="Feltwell T."/>
            <person name="Fraser A."/>
            <person name="Hamlin N."/>
            <person name="Holroyd S."/>
            <person name="Hornsby T."/>
            <person name="Jagels K."/>
            <person name="Lacroix C."/>
            <person name="Maclean J."/>
            <person name="Moule S."/>
            <person name="Murphy L.D."/>
            <person name="Oliver K."/>
            <person name="Quail M.A."/>
            <person name="Rajandream M.A."/>
            <person name="Rutherford K.M."/>
            <person name="Rutter S."/>
            <person name="Seeger K."/>
            <person name="Simon S."/>
            <person name="Simmonds M."/>
            <person name="Skelton J."/>
            <person name="Squares R."/>
            <person name="Squares S."/>
            <person name="Stevens K."/>
            <person name="Taylor K."/>
            <person name="Whitehead S."/>
            <person name="Woodward J.R."/>
            <person name="Barrell B.G."/>
        </authorList>
    </citation>
    <scope>NUCLEOTIDE SEQUENCE [LARGE SCALE GENOMIC DNA]</scope>
    <source>
        <strain>TN</strain>
    </source>
</reference>
<reference key="3">
    <citation type="journal article" date="1996" name="Microbiology">
        <title>Gene arrangement and organization in an approximately 76 kb fragment encompassing the oriC region of the chromosome of Mycobacterium leprae.</title>
        <authorList>
            <person name="Fsihi H."/>
            <person name="de Rossi E."/>
            <person name="Salazar L."/>
            <person name="Cantoni R."/>
            <person name="Labo M."/>
            <person name="Riccardi G."/>
            <person name="Takiff H.E."/>
            <person name="Eiglmeier K."/>
            <person name="Bergh S."/>
            <person name="Cole S.T."/>
        </authorList>
    </citation>
    <scope>NUCLEOTIDE SEQUENCE [GENOMIC DNA] OF 1-223</scope>
</reference>
<keyword id="KW-0067">ATP-binding</keyword>
<keyword id="KW-0963">Cytoplasm</keyword>
<keyword id="KW-0227">DNA damage</keyword>
<keyword id="KW-0234">DNA repair</keyword>
<keyword id="KW-0235">DNA replication</keyword>
<keyword id="KW-0238">DNA-binding</keyword>
<keyword id="KW-0547">Nucleotide-binding</keyword>
<keyword id="KW-1185">Reference proteome</keyword>
<keyword id="KW-0742">SOS response</keyword>
<proteinExistence type="inferred from homology"/>
<sequence length="385" mass="42067">MYVRHFGLRDFRSWDHVDLELNPGRTVFFGPNGNGKTNLIEALWYSTTLSSHRVGTDIPLIRAGTIRAIVSTIVVNEGRECAIDLEIAAGRANRARLNRSLVRGMREVVGVLRAVLFAPEDLALVCGDPANRRRYLDDLATVRQPVIAAVRADYDKVLRQRTALLKSLAAARYRSDQGVLDTLDVWDTRLAEHGAELMAARIDLVNQLAPEVEKAYQLLAPGSRTASISYRASLDIGGIAGVGSSDRALLQADLLAGLSTRRNVELERGICLVGPHRDELELRLGDQPAKGFASHGESWSLAIALRLAAYELLRADGNEPVLLLDDVFAELDAARCRALATVAESAEQVLVTSAAQEDIPVGWDAKWVTVDLRDSDSGRVSVVYP</sequence>
<accession>P46391</accession>
<protein>
    <recommendedName>
        <fullName>DNA replication and repair protein RecF</fullName>
    </recommendedName>
</protein>
<dbReference type="EMBL" id="Z70722">
    <property type="protein sequence ID" value="CAA94710.1"/>
    <property type="molecule type" value="Genomic_DNA"/>
</dbReference>
<dbReference type="EMBL" id="AL583917">
    <property type="protein sequence ID" value="CAC29511.1"/>
    <property type="molecule type" value="Genomic_DNA"/>
</dbReference>
<dbReference type="EMBL" id="L39923">
    <property type="protein sequence ID" value="AAB53143.1"/>
    <property type="molecule type" value="Genomic_DNA"/>
</dbReference>
<dbReference type="PIR" id="C86909">
    <property type="entry name" value="C86909"/>
</dbReference>
<dbReference type="PIR" id="T10003">
    <property type="entry name" value="T10003"/>
</dbReference>
<dbReference type="RefSeq" id="NP_301131.1">
    <property type="nucleotide sequence ID" value="NC_002677.1"/>
</dbReference>
<dbReference type="RefSeq" id="WP_010907456.1">
    <property type="nucleotide sequence ID" value="NC_002677.1"/>
</dbReference>
<dbReference type="SMR" id="P46391"/>
<dbReference type="STRING" id="272631.gene:17573812"/>
<dbReference type="KEGG" id="mle:ML0003"/>
<dbReference type="PATRIC" id="fig|272631.5.peg.3"/>
<dbReference type="Leproma" id="ML0003"/>
<dbReference type="eggNOG" id="COG1195">
    <property type="taxonomic scope" value="Bacteria"/>
</dbReference>
<dbReference type="HOGENOM" id="CLU_040267_1_1_11"/>
<dbReference type="OrthoDB" id="9803889at2"/>
<dbReference type="Proteomes" id="UP000000806">
    <property type="component" value="Chromosome"/>
</dbReference>
<dbReference type="GO" id="GO:0005737">
    <property type="term" value="C:cytoplasm"/>
    <property type="evidence" value="ECO:0007669"/>
    <property type="project" value="UniProtKB-SubCell"/>
</dbReference>
<dbReference type="GO" id="GO:0005524">
    <property type="term" value="F:ATP binding"/>
    <property type="evidence" value="ECO:0007669"/>
    <property type="project" value="UniProtKB-UniRule"/>
</dbReference>
<dbReference type="GO" id="GO:0003697">
    <property type="term" value="F:single-stranded DNA binding"/>
    <property type="evidence" value="ECO:0007669"/>
    <property type="project" value="UniProtKB-UniRule"/>
</dbReference>
<dbReference type="GO" id="GO:0006260">
    <property type="term" value="P:DNA replication"/>
    <property type="evidence" value="ECO:0007669"/>
    <property type="project" value="UniProtKB-UniRule"/>
</dbReference>
<dbReference type="GO" id="GO:0000731">
    <property type="term" value="P:DNA synthesis involved in DNA repair"/>
    <property type="evidence" value="ECO:0007669"/>
    <property type="project" value="TreeGrafter"/>
</dbReference>
<dbReference type="GO" id="GO:0006302">
    <property type="term" value="P:double-strand break repair"/>
    <property type="evidence" value="ECO:0007669"/>
    <property type="project" value="TreeGrafter"/>
</dbReference>
<dbReference type="GO" id="GO:0009432">
    <property type="term" value="P:SOS response"/>
    <property type="evidence" value="ECO:0007669"/>
    <property type="project" value="UniProtKB-UniRule"/>
</dbReference>
<dbReference type="CDD" id="cd03242">
    <property type="entry name" value="ABC_RecF"/>
    <property type="match status" value="1"/>
</dbReference>
<dbReference type="Gene3D" id="3.40.50.300">
    <property type="entry name" value="P-loop containing nucleotide triphosphate hydrolases"/>
    <property type="match status" value="1"/>
</dbReference>
<dbReference type="Gene3D" id="1.20.1050.90">
    <property type="entry name" value="RecF/RecN/SMC, N-terminal domain"/>
    <property type="match status" value="1"/>
</dbReference>
<dbReference type="HAMAP" id="MF_00365">
    <property type="entry name" value="RecF"/>
    <property type="match status" value="1"/>
</dbReference>
<dbReference type="InterPro" id="IPR001238">
    <property type="entry name" value="DNA-binding_RecF"/>
</dbReference>
<dbReference type="InterPro" id="IPR018078">
    <property type="entry name" value="DNA-binding_RecF_CS"/>
</dbReference>
<dbReference type="InterPro" id="IPR027417">
    <property type="entry name" value="P-loop_NTPase"/>
</dbReference>
<dbReference type="InterPro" id="IPR003395">
    <property type="entry name" value="RecF/RecN/SMC_N"/>
</dbReference>
<dbReference type="InterPro" id="IPR042174">
    <property type="entry name" value="RecF_2"/>
</dbReference>
<dbReference type="NCBIfam" id="TIGR00611">
    <property type="entry name" value="recf"/>
    <property type="match status" value="1"/>
</dbReference>
<dbReference type="PANTHER" id="PTHR32182">
    <property type="entry name" value="DNA REPLICATION AND REPAIR PROTEIN RECF"/>
    <property type="match status" value="1"/>
</dbReference>
<dbReference type="PANTHER" id="PTHR32182:SF0">
    <property type="entry name" value="DNA REPLICATION AND REPAIR PROTEIN RECF"/>
    <property type="match status" value="1"/>
</dbReference>
<dbReference type="Pfam" id="PF02463">
    <property type="entry name" value="SMC_N"/>
    <property type="match status" value="1"/>
</dbReference>
<dbReference type="SUPFAM" id="SSF52540">
    <property type="entry name" value="P-loop containing nucleoside triphosphate hydrolases"/>
    <property type="match status" value="1"/>
</dbReference>
<dbReference type="PROSITE" id="PS00617">
    <property type="entry name" value="RECF_1"/>
    <property type="match status" value="1"/>
</dbReference>
<dbReference type="PROSITE" id="PS00618">
    <property type="entry name" value="RECF_2"/>
    <property type="match status" value="1"/>
</dbReference>